<keyword id="KW-0002">3D-structure</keyword>
<keyword id="KW-0167">Capsid protein</keyword>
<keyword id="KW-0903">Direct protein sequencing</keyword>
<keyword id="KW-1035">Host cytoplasm</keyword>
<keyword id="KW-0378">Hydrolase</keyword>
<keyword id="KW-0479">Metal-binding</keyword>
<keyword id="KW-0645">Protease</keyword>
<keyword id="KW-0720">Serine protease</keyword>
<keyword id="KW-0946">Virion</keyword>
<reference key="1">
    <citation type="journal article" date="2004" name="J. Gen. Virol.">
        <title>Peptides resulting from the pVP2 C-terminal processing are present in infectious pancreatic necrosis virus particles.</title>
        <authorList>
            <person name="Galloux M."/>
            <person name="Chevalier C."/>
            <person name="Henry C."/>
            <person name="Huet J.-C."/>
            <person name="Da Costa B."/>
            <person name="Delmas B."/>
        </authorList>
    </citation>
    <scope>NUCLEOTIDE SEQUENCE [GENOMIC RNA]</scope>
    <scope>PROTEIN SEQUENCE OF 443-457; 487-495 AND 496-508</scope>
    <scope>PROTEOLYTIC PROCESSING OF POLYPROTEIN</scope>
    <source>
        <strain>31-75</strain>
    </source>
</reference>
<reference key="2">
    <citation type="submission" date="1996-02" db="EMBL/GenBank/DDBJ databases">
        <authorList>
            <person name="Mason C.L."/>
            <person name="Leong J.C."/>
        </authorList>
    </citation>
    <scope>NUCLEOTIDE SEQUENCE [GENOMIC RNA]</scope>
    <source>
        <strain>Isolate Mason</strain>
    </source>
</reference>
<reference key="3">
    <citation type="submission" date="1996-04" db="EMBL/GenBank/DDBJ databases">
        <authorList>
            <person name="Tseng C.-C."/>
            <person name="Lo C.-F."/>
            <person name="Kou G.-H."/>
        </authorList>
    </citation>
    <scope>NUCLEOTIDE SEQUENCE [GENOMIC RNA]</scope>
    <source>
        <strain>Isolate Tseng</strain>
    </source>
</reference>
<reference key="4">
    <citation type="journal article" date="2004" name="Virology">
        <title>Identification of putative motifs involved in the virulence of infectious pancreatic necrosis virus.</title>
        <authorList>
            <person name="Santi N."/>
            <person name="Vakharia V.N."/>
            <person name="Evensen O."/>
        </authorList>
    </citation>
    <scope>NUCLEOTIDE SEQUENCE [GENOMIC RNA]</scope>
    <source>
        <strain>Isolate NVI-001</strain>
        <strain>Isolate NVI-010</strain>
        <strain>Isolate NVI-011</strain>
        <strain>Isolate NVI-013</strain>
        <strain>Isolate NVI-015</strain>
        <strain>Isolate NVI-016</strain>
        <strain>Isolate NVI-020</strain>
        <strain>Isolate NVI-023</strain>
    </source>
</reference>
<reference key="5">
    <citation type="journal article" date="2004" name="Dis. Aquat. Organ.">
        <title>Molecular characterization of Sp serotype strains of infectious pancreatic necrosis virus exhibiting differences in virulence.</title>
        <authorList>
            <person name="Shivappa R.B."/>
            <person name="Song H."/>
            <person name="Yao K."/>
            <person name="Aas-Eng A."/>
            <person name="Evensen O."/>
            <person name="Vakharia V.N."/>
        </authorList>
    </citation>
    <scope>NUCLEOTIDE SEQUENCE [GENOMIC RNA]</scope>
    <source>
        <strain>Isolate Sp103</strain>
        <strain>Isolate Sp116</strain>
        <strain>Isolate Sp122</strain>
    </source>
</reference>
<reference key="6">
    <citation type="journal article" date="2005" name="J. Virol.">
        <title>Infectious pancreatic necrosis virus VP5 is dispensable for virulence and persistence.</title>
        <authorList>
            <person name="Santi N."/>
            <person name="Song H."/>
            <person name="Vakharia V.N."/>
            <person name="Evensen O."/>
        </authorList>
    </citation>
    <scope>NUCLEOTIDE SEQUENCE [GENOMIC RNA]</scope>
    <source>
        <strain>Isolate Sp103</strain>
    </source>
</reference>
<reference key="7">
    <citation type="journal article" date="2001" name="Dis. Aquat. Organ.">
        <title>Phylogenetic relationships of aquatic birnaviruses based on deduced amino acid sequences of genome segment A cDNA.</title>
        <authorList>
            <person name="Blake S."/>
            <person name="Ma J.Y."/>
            <person name="Caporale D.A."/>
            <person name="Jairath S."/>
            <person name="Nicholson B.L."/>
        </authorList>
    </citation>
    <scope>NUCLEOTIDE SEQUENCE [MRNA] OF 1-968</scope>
    <source>
        <strain>Isolate Blake</strain>
    </source>
</reference>
<reference key="8">
    <citation type="journal article" date="1993" name="Virology">
        <title>Comparison of amino acid sequences deduced from a cDNA fragment obtained from infectious pancreatic necrosis virus (IPNV) strains of different serotypes.</title>
        <authorList>
            <person name="Heppell J."/>
            <person name="Berthiaume L."/>
            <person name="Corbin F."/>
            <person name="Tarrab E."/>
            <person name="Lecomte J."/>
            <person name="Arella M."/>
        </authorList>
    </citation>
    <scope>NUCLEOTIDE SEQUENCE [GENOMIC RNA] OF 437-539</scope>
    <source>
        <strain>Isolate Heppell</strain>
    </source>
</reference>
<reference key="9">
    <citation type="journal article" date="2000" name="J. Virol.">
        <title>Active residues and viral substrate cleavage sites of the protease of the birnavirus infectious pancreatic necrosis virus.</title>
        <authorList>
            <person name="Petit S."/>
            <person name="Lejal N."/>
            <person name="Huet J.-C."/>
            <person name="Delmas B."/>
        </authorList>
    </citation>
    <scope>PROTEIN SEQUENCE OF 509-515; 716-723 AND 735-740</scope>
    <scope>ACTIVE SITES OF PROTEASE VP4</scope>
    <scope>PROTEOLYTIC PROCESSING OF POLYPROTEIN</scope>
    <scope>MUTAGENESIS OF 486-ALA-ALA-487; 495-ALA-ALA-496; 508-ALA-SER-509; HIS-547; ASP-573; ASP-585; ASP-595; ASP-601; SER-633; ASP-644; 660-ASP-ASP-661; ASP-672; LYS-674; ALA-675; ILE-676; ALA-677; ALA-678; HIS-679; GLU-680; GLY-682; LEU-683; PRO-684; LEU-685; ILE-686; GLY-687; GLN-689; ASP-693; HIS-704 AND 734-ALA-SER-735</scope>
    <source>
        <strain>31-75</strain>
    </source>
</reference>
<reference key="10">
    <citation type="journal article" date="2005" name="J. Gen. Virol.">
        <title>Structure of birnavirus-like particles determined by combined electron cryomicroscopy and X-ray crystallography.</title>
        <authorList>
            <person name="Pous J."/>
            <person name="Chevalier C."/>
            <person name="Ouldali M."/>
            <person name="Navaza J."/>
            <person name="Delmas B."/>
            <person name="Lepault J."/>
        </authorList>
    </citation>
    <scope>3D-STRUCTURE MODELING</scope>
    <scope>STRUCTURE BY ELECTRON MICROSCOPY (15 ANGSTROMS) OF VIRAL PARTICLES</scope>
    <source>
        <strain>31-75</strain>
    </source>
</reference>
<reference key="11">
    <citation type="journal article" date="2007" name="J. Biol. Chem.">
        <title>Crystal structure of the VP4 protease from infectious pancreatic necrosis virus reveals the acyl-enzyme complex for an intermolecular self-cleavage reaction.</title>
        <authorList>
            <person name="Lee J."/>
            <person name="Feldman A.R."/>
            <person name="Delmas B."/>
            <person name="Paetzel M."/>
        </authorList>
    </citation>
    <scope>X-RAY CRYSTALLOGRAPHY (2.21 ANGSTROMS) OF 514-716</scope>
</reference>
<accession>Q703G9</accession>
<accession>P90205</accession>
<accession>Q4KTX8</accession>
<accession>Q69CH7</accession>
<accession>Q69CI0</accession>
<accession>Q69CI3</accession>
<accession>Q6U2N3</accession>
<accession>Q6U2N5</accession>
<accession>Q6U2N8</accession>
<accession>Q6U2P1</accession>
<accession>Q6U2P5</accession>
<accession>Q6U2P7</accession>
<accession>Q6UAY7</accession>
<accession>Q82733</accession>
<accession>Q990Q0</accession>
<accession>Q9YJV0</accession>
<evidence type="ECO:0000250" key="1"/>
<evidence type="ECO:0000255" key="2">
    <source>
        <dbReference type="PROSITE-ProRule" id="PRU00881"/>
    </source>
</evidence>
<evidence type="ECO:0000256" key="3">
    <source>
        <dbReference type="SAM" id="MobiDB-lite"/>
    </source>
</evidence>
<evidence type="ECO:0000269" key="4">
    <source>
    </source>
</evidence>
<evidence type="ECO:0000269" key="5">
    <source>
    </source>
</evidence>
<evidence type="ECO:0000305" key="6"/>
<evidence type="ECO:0007829" key="7">
    <source>
        <dbReference type="PDB" id="3IDE"/>
    </source>
</evidence>
<organism>
    <name type="scientific">Infectious pancreatic necrosis virus (strain Sp)</name>
    <name type="common">IPNV</name>
    <dbReference type="NCBI Taxonomy" id="11005"/>
    <lineage>
        <taxon>Viruses</taxon>
        <taxon>Riboviria</taxon>
        <taxon>Orthornavirae</taxon>
        <taxon>Birnaviridae</taxon>
        <taxon>Aquabirnavirus</taxon>
        <taxon>Aquabirnavirus salmonidae</taxon>
    </lineage>
</organism>
<organismHost>
    <name type="scientific">Oncorhynchus mykiss</name>
    <name type="common">Rainbow trout</name>
    <name type="synonym">Salmo gairdneri</name>
    <dbReference type="NCBI Taxonomy" id="8022"/>
</organismHost>
<organismHost>
    <name type="scientific">Salmo</name>
    <dbReference type="NCBI Taxonomy" id="8028"/>
</organismHost>
<proteinExistence type="evidence at protein level"/>
<comment type="function">
    <text evidence="1">Capsid protein VP2 self assembles to form an icosahedral capsid with a T=13 symmetry, about 70 nm in diameter, and consisting of 260 VP2 trimers. The capsid encapsulates the genomic dsRNA. VP2 is also involved in attachment and entry into the host cell (By similarity).</text>
</comment>
<comment type="function">
    <text evidence="1">The precursor of VP2 plays an important role in capsid assembly. First, pre-VP2 and VP2 oligomers assemble to form a procapsid. Then, the pre-VP2 intermediates may be processed into VP2 proteins by proteolytic cleavage mediated by VP4 to obtain the mature virion. The final capsid is composed of pentamers and hexamers but VP2 has a natural tendency to assemble into all-pentameric structures. Therefore pre-VP2 may be required to allow formation of the hexameric structures (By similarity).</text>
</comment>
<comment type="function">
    <text evidence="2">Protease VP4 is a serine protease that cleaves the polyprotein into its final products. Pre-VP2 is first partially cleaved, and may be completely processed by VP4 upon capsid maturation.</text>
</comment>
<comment type="function">
    <text evidence="1">Capsid protein VP3 plays a key role in virion assembly by providing a scaffold for the capsid made of VP2. May self-assemble to form a T=4-like icosahedral inner-capsid composed of at least 180 trimers. Plays a role in genomic RNA packaging by recruiting VP1 into the capsid and interacting with the dsRNA genome segments to form a ribonucleoprotein complex. Additionally, the interaction of the VP3 C-terminal tail with VP1 removes the inherent structural blockade of the polymerase active site. Thus, VP3 can also function as a transcriptional activator (By similarity).</text>
</comment>
<comment type="function">
    <text evidence="1">Structural peptide 1 is a small peptide derived from pre-VP2 C-terminus. It destabilizes and perforates cell membranes, suggesting a role during entry (By similarity).</text>
</comment>
<comment type="function">
    <text evidence="1">Structural peptide 2 is a small peptide derived from pVP2 C-terminus. It is not essential for the virus viability, but viral growth is affected when missing (By similarity).</text>
</comment>
<comment type="function">
    <text evidence="1">Structural peptide 3 is a small peptide derived from pVP2 C-terminus. It is not essential for the virus viability, but viral growth is affected when missing (By similarity).</text>
</comment>
<comment type="subunit">
    <molecule>Capsid protein VP2</molecule>
    <text evidence="6">Homotrimer. A central divalent metal (possibly cobalt) stabilizes the VP2 trimer.</text>
</comment>
<comment type="subunit">
    <molecule>Capsid protein VP3</molecule>
    <text evidence="1">Homodimer. interacts (via C-terminus) with VP1 in the cytoplasm. Interacts with VP2 (By similarity).</text>
</comment>
<comment type="subcellular location">
    <molecule>Capsid protein VP2</molecule>
    <subcellularLocation>
        <location evidence="6">Virion</location>
    </subcellularLocation>
    <subcellularLocation>
        <location evidence="6">Host cytoplasm</location>
    </subcellularLocation>
</comment>
<comment type="subcellular location">
    <molecule>Capsid protein VP3</molecule>
    <subcellularLocation>
        <location evidence="6">Virion</location>
    </subcellularLocation>
    <subcellularLocation>
        <location evidence="6">Host cytoplasm</location>
    </subcellularLocation>
</comment>
<comment type="subcellular location">
    <molecule>Structural peptide 1</molecule>
    <subcellularLocation>
        <location evidence="6">Virion</location>
    </subcellularLocation>
    <subcellularLocation>
        <location evidence="6">Host cytoplasm</location>
    </subcellularLocation>
</comment>
<comment type="subcellular location">
    <molecule>Structural peptide 2</molecule>
    <subcellularLocation>
        <location evidence="6">Virion</location>
    </subcellularLocation>
    <subcellularLocation>
        <location evidence="6">Host cytoplasm</location>
    </subcellularLocation>
</comment>
<comment type="subcellular location">
    <molecule>Structural peptide 3</molecule>
    <subcellularLocation>
        <location evidence="6">Virion</location>
    </subcellularLocation>
    <subcellularLocation>
        <location evidence="6">Host cytoplasm</location>
    </subcellularLocation>
</comment>
<comment type="PTM">
    <text evidence="1">Specific enzymatic cleavages yield mature proteins. The capsid assembly seems to be regulated by polyprotein processing. The protease VP4 cleaves itself off the polyprotein, thus releasing pre-VP2 and VP3 within the infected cell. During capsid assembly, the C-terminus of pre-VP2 is further processed by VP4, giving rise to VP2, the external capsid protein and three small peptides that all stay closely associated with the capsid (By similarity).</text>
</comment>
<comment type="miscellaneous">
    <text>The sequence shown is that of strain 31-75. Isolate Sp103 is VP5-deficient.</text>
</comment>
<dbReference type="EC" id="3.4.21.-"/>
<dbReference type="EMBL" id="AJ622822">
    <property type="protein sequence ID" value="CAF22217.1"/>
    <property type="molecule type" value="Genomic_RNA"/>
</dbReference>
<dbReference type="EMBL" id="U48225">
    <property type="protein sequence ID" value="AAD11535.1"/>
    <property type="molecule type" value="Genomic_RNA"/>
</dbReference>
<dbReference type="EMBL" id="U56907">
    <property type="protein sequence ID" value="AAB39512.1"/>
    <property type="molecule type" value="Genomic_RNA"/>
</dbReference>
<dbReference type="EMBL" id="AY374435">
    <property type="protein sequence ID" value="AAQ75364.1"/>
    <property type="molecule type" value="Genomic_RNA"/>
</dbReference>
<dbReference type="EMBL" id="AY379735">
    <property type="protein sequence ID" value="AAQ75348.1"/>
    <property type="molecule type" value="Genomic_RNA"/>
</dbReference>
<dbReference type="EMBL" id="AY379736">
    <property type="protein sequence ID" value="AAQ75350.1"/>
    <property type="molecule type" value="Genomic_RNA"/>
</dbReference>
<dbReference type="EMBL" id="AY379737">
    <property type="protein sequence ID" value="AAQ75352.1"/>
    <property type="molecule type" value="Genomic_RNA"/>
</dbReference>
<dbReference type="EMBL" id="AY379738">
    <property type="protein sequence ID" value="AAQ75354.1"/>
    <property type="molecule type" value="Genomic_RNA"/>
</dbReference>
<dbReference type="EMBL" id="AY379740">
    <property type="protein sequence ID" value="AAQ75357.1"/>
    <property type="molecule type" value="Genomic_RNA"/>
</dbReference>
<dbReference type="EMBL" id="AY379742">
    <property type="protein sequence ID" value="AAQ75360.1"/>
    <property type="molecule type" value="Genomic_RNA"/>
</dbReference>
<dbReference type="EMBL" id="AY379744">
    <property type="protein sequence ID" value="AAQ75363.1"/>
    <property type="molecule type" value="Genomic_RNA"/>
</dbReference>
<dbReference type="EMBL" id="AY354519">
    <property type="protein sequence ID" value="AAR10446.1"/>
    <property type="molecule type" value="Genomic_RNA"/>
</dbReference>
<dbReference type="EMBL" id="AY354520">
    <property type="protein sequence ID" value="AAR10449.1"/>
    <property type="molecule type" value="Genomic_RNA"/>
</dbReference>
<dbReference type="EMBL" id="AY354521">
    <property type="protein sequence ID" value="AAR10452.1"/>
    <property type="molecule type" value="Genomic_RNA"/>
</dbReference>
<dbReference type="EMBL" id="AY823632">
    <property type="protein sequence ID" value="AAX24140.1"/>
    <property type="molecule type" value="Genomic_RNA"/>
</dbReference>
<dbReference type="EMBL" id="AF342728">
    <property type="protein sequence ID" value="AAK32154.1"/>
    <property type="molecule type" value="mRNA"/>
</dbReference>
<dbReference type="EMBL" id="L13988">
    <property type="protein sequence ID" value="AAB00986.1"/>
    <property type="molecule type" value="Genomic_RNA"/>
</dbReference>
<dbReference type="PDB" id="2PNL">
    <property type="method" value="X-ray"/>
    <property type="resolution" value="2.21 A"/>
    <property type="chains" value="A/B/C/D/E/F/G/H/I/J=514-716"/>
</dbReference>
<dbReference type="PDB" id="2PNM">
    <property type="method" value="X-ray"/>
    <property type="resolution" value="2.30 A"/>
    <property type="chains" value="A=524-716"/>
</dbReference>
<dbReference type="PDB" id="3IDE">
    <property type="method" value="X-ray"/>
    <property type="resolution" value="3.35 A"/>
    <property type="chains" value="A/B/C/D/E=1-442"/>
</dbReference>
<dbReference type="PDBsum" id="2PNL"/>
<dbReference type="PDBsum" id="2PNM"/>
<dbReference type="PDBsum" id="3IDE"/>
<dbReference type="SMR" id="Q703G9"/>
<dbReference type="MEROPS" id="S50.001"/>
<dbReference type="BRENDA" id="3.4.21.115">
    <property type="organism ID" value="6986"/>
</dbReference>
<dbReference type="EvolutionaryTrace" id="Q703G9"/>
<dbReference type="Proteomes" id="UP000007213">
    <property type="component" value="Genome"/>
</dbReference>
<dbReference type="GO" id="GO:0030430">
    <property type="term" value="C:host cell cytoplasm"/>
    <property type="evidence" value="ECO:0007669"/>
    <property type="project" value="UniProtKB-SubCell"/>
</dbReference>
<dbReference type="GO" id="GO:0019028">
    <property type="term" value="C:viral capsid"/>
    <property type="evidence" value="ECO:0007669"/>
    <property type="project" value="UniProtKB-KW"/>
</dbReference>
<dbReference type="GO" id="GO:0046872">
    <property type="term" value="F:metal ion binding"/>
    <property type="evidence" value="ECO:0007669"/>
    <property type="project" value="UniProtKB-KW"/>
</dbReference>
<dbReference type="GO" id="GO:0008236">
    <property type="term" value="F:serine-type peptidase activity"/>
    <property type="evidence" value="ECO:0007669"/>
    <property type="project" value="UniProtKB-KW"/>
</dbReference>
<dbReference type="GO" id="GO:0005198">
    <property type="term" value="F:structural molecule activity"/>
    <property type="evidence" value="ECO:0007669"/>
    <property type="project" value="InterPro"/>
</dbReference>
<dbReference type="GO" id="GO:0006508">
    <property type="term" value="P:proteolysis"/>
    <property type="evidence" value="ECO:0007669"/>
    <property type="project" value="UniProtKB-KW"/>
</dbReference>
<dbReference type="Gene3D" id="2.60.120.20">
    <property type="match status" value="1"/>
</dbReference>
<dbReference type="Gene3D" id="3.30.230.110">
    <property type="match status" value="1"/>
</dbReference>
<dbReference type="Gene3D" id="6.10.250.1030">
    <property type="match status" value="1"/>
</dbReference>
<dbReference type="Gene3D" id="1.10.8.880">
    <property type="entry name" value="Birnavirus VP3 protein, domain 2"/>
    <property type="match status" value="1"/>
</dbReference>
<dbReference type="Gene3D" id="1.10.150.620">
    <property type="entry name" value="Capsid protein VP3, domain 1"/>
    <property type="match status" value="1"/>
</dbReference>
<dbReference type="Gene3D" id="2.60.120.660">
    <property type="entry name" value="icosahedral virus"/>
    <property type="match status" value="1"/>
</dbReference>
<dbReference type="InterPro" id="IPR002662">
    <property type="entry name" value="Birna_VP2"/>
</dbReference>
<dbReference type="InterPro" id="IPR002663">
    <property type="entry name" value="Birna_VP3"/>
</dbReference>
<dbReference type="InterPro" id="IPR043048">
    <property type="entry name" value="Birna_VP3_dom1"/>
</dbReference>
<dbReference type="InterPro" id="IPR043049">
    <property type="entry name" value="Birna_VP3_dom2"/>
</dbReference>
<dbReference type="InterPro" id="IPR025775">
    <property type="entry name" value="Birna_VP4_Prtase_dom"/>
</dbReference>
<dbReference type="InterPro" id="IPR029053">
    <property type="entry name" value="Viral_coat"/>
</dbReference>
<dbReference type="Pfam" id="PF01766">
    <property type="entry name" value="Birna_VP2"/>
    <property type="match status" value="1"/>
</dbReference>
<dbReference type="Pfam" id="PF01767">
    <property type="entry name" value="Birna_VP3"/>
    <property type="match status" value="1"/>
</dbReference>
<dbReference type="Pfam" id="PF01768">
    <property type="entry name" value="Birna_VP4"/>
    <property type="match status" value="1"/>
</dbReference>
<dbReference type="SUPFAM" id="SSF88633">
    <property type="entry name" value="Positive stranded ssRNA viruses"/>
    <property type="match status" value="1"/>
</dbReference>
<dbReference type="PROSITE" id="PS51548">
    <property type="entry name" value="BIRNAVIRUS_VP4_PRO"/>
    <property type="match status" value="1"/>
</dbReference>
<name>POLS_IPNVS</name>
<feature type="chain" id="PRO_0000392599" description="Precursor of VP2">
    <location>
        <begin position="1"/>
        <end position="508"/>
    </location>
</feature>
<feature type="chain" id="PRO_0000227873" description="Capsid protein VP2">
    <location>
        <begin position="1"/>
        <end position="442"/>
    </location>
</feature>
<feature type="peptide" id="PRO_0000227874" description="Structural peptide 1" evidence="5">
    <location>
        <begin position="443"/>
        <end position="486"/>
    </location>
</feature>
<feature type="peptide" id="PRO_0000227875" description="Structural peptide 2" evidence="5">
    <location>
        <begin position="487"/>
        <end position="495"/>
    </location>
</feature>
<feature type="peptide" id="PRO_0000227876" description="Structural peptide 3" evidence="4">
    <location>
        <begin position="496"/>
        <end position="508"/>
    </location>
</feature>
<feature type="chain" id="PRO_0000227877" description="Protease VP4">
    <location>
        <begin position="509"/>
        <end position="734"/>
    </location>
</feature>
<feature type="chain" id="PRO_0000227878" description="Capsid protein VP3">
    <location>
        <begin position="735"/>
        <end position="972"/>
    </location>
</feature>
<feature type="domain" description="Peptidase S50" evidence="2">
    <location>
        <begin position="509"/>
        <end position="734"/>
    </location>
</feature>
<feature type="region of interest" description="Disordered" evidence="3">
    <location>
        <begin position="794"/>
        <end position="817"/>
    </location>
</feature>
<feature type="region of interest" description="Disordered" evidence="3">
    <location>
        <begin position="916"/>
        <end position="972"/>
    </location>
</feature>
<feature type="compositionally biased region" description="Basic and acidic residues" evidence="3">
    <location>
        <begin position="801"/>
        <end position="817"/>
    </location>
</feature>
<feature type="compositionally biased region" description="Polar residues" evidence="3">
    <location>
        <begin position="963"/>
        <end position="972"/>
    </location>
</feature>
<feature type="active site" description="Nucleophile" evidence="2 4">
    <location>
        <position position="633"/>
    </location>
</feature>
<feature type="active site" evidence="2 4">
    <location>
        <position position="674"/>
    </location>
</feature>
<feature type="binding site" evidence="1">
    <location>
        <position position="26"/>
    </location>
    <ligand>
        <name>a divalent metal cation</name>
        <dbReference type="ChEBI" id="CHEBI:60240"/>
        <note>ligand shared between trimeric partners</note>
    </ligand>
</feature>
<feature type="site" description="Cleavage; by protease VP4">
    <location>
        <begin position="442"/>
        <end position="443"/>
    </location>
</feature>
<feature type="site" description="Cleavage; by protease VP4">
    <location>
        <begin position="486"/>
        <end position="487"/>
    </location>
</feature>
<feature type="site" description="Cleavage; by protease VP4">
    <location>
        <begin position="495"/>
        <end position="496"/>
    </location>
</feature>
<feature type="site" description="Cleavage; by protease VP4">
    <location>
        <begin position="508"/>
        <end position="509"/>
    </location>
</feature>
<feature type="site" description="Cleavage; by protease VP4; subsidiary">
    <location>
        <begin position="715"/>
        <end position="716"/>
    </location>
</feature>
<feature type="site" description="Cleavage; by protease VP4">
    <location>
        <begin position="734"/>
        <end position="735"/>
    </location>
</feature>
<feature type="sequence variant" description="In strain: Isolate Mason.">
    <original>Q</original>
    <variation>P</variation>
    <location>
        <position position="36"/>
    </location>
</feature>
<feature type="sequence variant" description="In strain: Isolate Mason.">
    <original>S</original>
    <variation>P</variation>
    <location>
        <position position="46"/>
    </location>
</feature>
<feature type="sequence variant" description="In strain: Isolate Mason, Isolate Tseng, Isolate Blake, Isolate Sp103, Isolate Sp116, Isolate Sp122, Isolate NVI-001, Isolate NVI-011, Isolate NVI-013, Isolate NVI-015, Isolate NVI-016, Isolate NVI-020 and NVI-023.">
    <original>V</original>
    <variation>I</variation>
    <location>
        <position position="52"/>
    </location>
</feature>
<feature type="sequence variant" description="In strain: Isolate NVI-010.">
    <original>V</original>
    <variation>I</variation>
    <location>
        <position position="54"/>
    </location>
</feature>
<feature type="sequence variant" description="In strain: Isolate Mason.">
    <original>WLET</original>
    <variation>CWRA</variation>
    <location>
        <begin position="82"/>
        <end position="85"/>
    </location>
</feature>
<feature type="sequence variant" description="In strain: Isolate Mason, Isolate Blake and Isolate Tseng.">
    <original>V</original>
    <variation>A</variation>
    <location>
        <position position="152"/>
    </location>
</feature>
<feature type="sequence variant" description="In strain: Isolate Mason, Isolate Blake and Isolate Tseng.">
    <original>K</original>
    <variation>R</variation>
    <location>
        <position position="192"/>
    </location>
</feature>
<feature type="sequence variant" description="In strain: Isolate Sp103 and Isolate Sp122.">
    <original>I</original>
    <variation>T</variation>
    <location>
        <position position="199"/>
    </location>
</feature>
<feature type="sequence variant" description="In strain: Isolate Mason, Isolate Blake and Isolate Tseng.">
    <original>R</original>
    <variation>S</variation>
    <location>
        <position position="212"/>
    </location>
</feature>
<feature type="sequence variant" description="In strain: Isolate Sp122, Isolate NVI-001, Isolate NVI-011, Isolate NVI-013, Isolate NVI-015, Isolate NVI-020 and Isolate NVI-023.">
    <original>P</original>
    <variation>T</variation>
    <location>
        <position position="217"/>
    </location>
</feature>
<feature type="sequence variant" description="In strain: Isolate NVI-010.">
    <original>T</original>
    <variation>I</variation>
    <location>
        <position position="219"/>
    </location>
</feature>
<feature type="sequence variant" description="In strain: Isolate NVI-001, Isolate NVI-013, Isolate NVI-015, Isolate Sp116 and Isolate NVI-023.">
    <original>T</original>
    <variation>A</variation>
    <location>
        <position position="221"/>
    </location>
</feature>
<feature type="sequence variant" description="In strain: Isolate NVI-011.">
    <original>L</original>
    <variation>P</variation>
    <location>
        <position position="222"/>
    </location>
</feature>
<feature type="sequence variant" description="In strain: Isolate Tseng.">
    <original>N</original>
    <variation>S</variation>
    <location>
        <position position="234"/>
    </location>
</feature>
<feature type="sequence variant" description="In strain: Isolate Sp122, Isolate NVI-001, Isolate NVI-013, Isolate NVI-015 and Isolate NVI-023.">
    <original>A</original>
    <variation>T</variation>
    <location>
        <position position="247"/>
    </location>
</feature>
<feature type="sequence variant" description="In strain: Isolate Tseng.">
    <original>Q</original>
    <variation>R</variation>
    <location>
        <position position="249"/>
    </location>
</feature>
<feature type="sequence variant" description="In strain: Isolate Mason, Isolate Tseng, Isolate Blake, Isolate Sp103, Isolate NVI-010 and Isolate NVI-016.">
    <original>D</original>
    <variation>N</variation>
    <location>
        <position position="252"/>
    </location>
</feature>
<feature type="sequence variant" description="In strain: Isolate NVI-001, Isolate NVI-011, Isolate NVI-013, Isolate NVI-015, Isolate NVI-020, Isolate NVI-023, Isolate Sp116 and Isolate Sp122.">
    <original>D</original>
    <variation>V</variation>
    <location>
        <position position="252"/>
    </location>
</feature>
<feature type="sequence variant" description="In strain: Isolate Mason, Isolate Blake and Isolate Tseng.">
    <original>K</original>
    <variation>R</variation>
    <location>
        <position position="255"/>
    </location>
</feature>
<feature type="sequence variant" description="In strain: Isolate Mason.">
    <original>F</original>
    <variation>L</variation>
    <location>
        <position position="262"/>
    </location>
</feature>
<feature type="sequence variant" description="In strain: Isolate Sp116.">
    <original>V</original>
    <variation>A</variation>
    <location>
        <position position="288"/>
    </location>
</feature>
<feature type="sequence variant" description="In strain: Isolate NVI-016.">
    <original>A</original>
    <variation>E</variation>
    <location>
        <position position="319"/>
    </location>
</feature>
<feature type="sequence variant" description="In strain: Isolate NVI-020.">
    <original>V</original>
    <variation>A</variation>
    <location>
        <position position="323"/>
    </location>
</feature>
<feature type="sequence variant" description="In strain: Isolate NVI-016.">
    <original>V</original>
    <variation>F</variation>
    <location>
        <position position="323"/>
    </location>
</feature>
<feature type="sequence variant" description="In strain: Isolate Mason.">
    <original>DFS</original>
    <variation>EKT</variation>
    <location>
        <begin position="432"/>
        <end position="434"/>
    </location>
</feature>
<feature type="sequence variant" description="In strain: Isolate Mason.">
    <original>V</original>
    <variation>I</variation>
    <location>
        <position position="455"/>
    </location>
</feature>
<feature type="sequence variant" description="In strain: Isolate Mason, Isolate Heppel and Isolate Blake.">
    <original>M</original>
    <variation>T</variation>
    <location>
        <position position="473"/>
    </location>
</feature>
<feature type="sequence variant" description="In strain: Isolate Heppel, Isolate NVI-010, Isolate NVI-011, Isolate NVI-020, Isolate Sp103 and Isolate Sp116.">
    <original>Y</original>
    <variation>H</variation>
    <location>
        <position position="500"/>
    </location>
</feature>
<feature type="sequence variant" description="In strain: Isolate Mason.">
    <original>P</original>
    <variation>R</variation>
    <location>
        <position position="565"/>
    </location>
</feature>
<feature type="sequence variant" description="In strain: Isolate Mason.">
    <original>EL</original>
    <variation>SF</variation>
    <location>
        <begin position="570"/>
        <end position="571"/>
    </location>
</feature>
<feature type="sequence variant" description="In strain: Isolate NVI-016.">
    <original>D</original>
    <variation>A</variation>
    <location>
        <position position="672"/>
    </location>
</feature>
<feature type="sequence variant" description="In strain: Isolate NVI-016.">
    <original>K</original>
    <variation>Q</variation>
    <location>
        <position position="717"/>
    </location>
</feature>
<feature type="sequence variant" description="In strain: Isolate NVI-011.">
    <original>D</original>
    <variation>G</variation>
    <location>
        <position position="788"/>
    </location>
</feature>
<feature type="sequence variant" description="In strain: Isolate NVI-001.">
    <original>D</original>
    <variation>Y</variation>
    <location>
        <position position="788"/>
    </location>
</feature>
<feature type="sequence variant" description="In strain: Isolate NVI-015 and Isolate NVI-016.">
    <original>H</original>
    <variation>R</variation>
    <location>
        <position position="802"/>
    </location>
</feature>
<feature type="sequence variant" description="In strain: Isolate NVI-016.">
    <original>L</original>
    <variation>M</variation>
    <location>
        <position position="841"/>
    </location>
</feature>
<feature type="sequence variant" description="In strain: Isolate Mason and Isolate Blake.">
    <original>E</original>
    <variation>Q</variation>
    <location>
        <position position="867"/>
    </location>
</feature>
<feature type="sequence variant" description="In strain: Isolate NVI-016.">
    <original>P</original>
    <variation>S</variation>
    <location>
        <position position="875"/>
    </location>
</feature>
<feature type="sequence variant" description="In strain: Isolate Tseng.">
    <original>M</original>
    <variation>T</variation>
    <location>
        <position position="882"/>
    </location>
</feature>
<feature type="sequence variant" description="In strain: Isolate Mason.">
    <original>AE</original>
    <variation>GK</variation>
    <location>
        <begin position="953"/>
        <end position="954"/>
    </location>
</feature>
<feature type="sequence variant" description="In strain: Isolate Mason.">
    <original>GR</original>
    <variation>DV</variation>
    <location>
        <begin position="959"/>
        <end position="960"/>
    </location>
</feature>
<feature type="sequence variant" description="In strain: Isolate Sp116.">
    <original>D</original>
    <variation>N</variation>
    <location>
        <position position="968"/>
    </location>
</feature>
<feature type="mutagenesis site" description="Complete loss of pVP2-VP4 cleavage." evidence="4">
    <original>AS</original>
    <variation>QL</variation>
    <location>
        <begin position="508"/>
        <end position="509"/>
    </location>
</feature>
<feature type="mutagenesis site" description="Strongly reduced VP4-VP3 cleavage. No effect on pVP2-VP4 cleavage." evidence="4">
    <original>H</original>
    <variation>S</variation>
    <location>
        <position position="547"/>
    </location>
</feature>
<feature type="mutagenesis site" description="No effect on polyprotein processing." evidence="4">
    <original>D</original>
    <variation>Q</variation>
    <location>
        <position position="573"/>
    </location>
</feature>
<feature type="mutagenesis site" description="No effect on polyprotein processing." evidence="4">
    <original>D</original>
    <variation>I</variation>
    <location>
        <position position="585"/>
    </location>
</feature>
<feature type="mutagenesis site" description="No effect on polyprotein processing." evidence="4">
    <original>D</original>
    <variation>L</variation>
    <location>
        <position position="595"/>
    </location>
</feature>
<feature type="mutagenesis site" description="No effect on polyprotein processing." evidence="4">
    <original>D</original>
    <variation>S</variation>
    <location>
        <position position="601"/>
    </location>
</feature>
<feature type="mutagenesis site" description="Complete loss of protease activity." evidence="4">
    <original>S</original>
    <variation>A</variation>
    <variation>Q</variation>
    <variation>T</variation>
    <location>
        <position position="633"/>
    </location>
</feature>
<feature type="mutagenesis site" description="Partial loss of protease activity." evidence="4">
    <original>S</original>
    <variation>C</variation>
    <location>
        <position position="633"/>
    </location>
</feature>
<feature type="mutagenesis site" description="No effect on polyprotein processing." evidence="4">
    <original>D</original>
    <variation>I</variation>
    <location>
        <position position="644"/>
    </location>
</feature>
<feature type="mutagenesis site" description="No effect on polyprotein processing." evidence="4">
    <original>DD</original>
    <variation>GS</variation>
    <location>
        <begin position="660"/>
        <end position="661"/>
    </location>
</feature>
<feature type="mutagenesis site" description="No effect on polyprotein processing." evidence="4">
    <original>D</original>
    <variation>N</variation>
    <location>
        <position position="672"/>
    </location>
</feature>
<feature type="mutagenesis site" description="Complete loss of protease activity." evidence="4">
    <original>K</original>
    <variation>A</variation>
    <variation>D</variation>
    <variation>H</variation>
    <variation>Q</variation>
    <variation>R</variation>
    <location>
        <position position="674"/>
    </location>
</feature>
<feature type="mutagenesis site" description="60% loss of pVP2-VP4 and VP4-VP3 cleavages." evidence="4">
    <original>A</original>
    <variation>D</variation>
    <location>
        <position position="675"/>
    </location>
</feature>
<feature type="mutagenesis site" description="No effect on polyprotein processing." evidence="4">
    <original>I</original>
    <variation>A</variation>
    <location>
        <position position="676"/>
    </location>
</feature>
<feature type="mutagenesis site" description="60% loss of pVP2-VP4. Complete loss of VP4-VP3 cleavage." evidence="4">
    <original>A</original>
    <variation>D</variation>
    <location>
        <position position="677"/>
    </location>
</feature>
<feature type="mutagenesis site" description="No effect on polyprotein processing." evidence="4">
    <original>A</original>
    <variation>S</variation>
    <location>
        <position position="678"/>
    </location>
</feature>
<feature type="mutagenesis site" description="Strongly reduced VP4-VP3 cleavage. No effect on pVP2-VP4 cleavage." evidence="4">
    <original>H</original>
    <variation>L</variation>
    <location>
        <position position="679"/>
    </location>
</feature>
<feature type="mutagenesis site" description="No effect on polyprotein processing." evidence="4">
    <original>E</original>
    <variation>M</variation>
    <location>
        <position position="680"/>
    </location>
</feature>
<feature type="mutagenesis site" description="No effect on polyprotein processing." evidence="4">
    <original>G</original>
    <variation>L</variation>
    <location>
        <position position="682"/>
    </location>
</feature>
<feature type="mutagenesis site" description="60% loss of pVP2-VP4 and VP4-VP3 cleavages." evidence="4">
    <original>L</original>
    <variation>A</variation>
    <location>
        <position position="683"/>
    </location>
</feature>
<feature type="mutagenesis site" description="No effect on polyprotein processing." evidence="4">
    <original>P</original>
    <variation>Q</variation>
    <location>
        <position position="684"/>
    </location>
</feature>
<feature type="mutagenesis site" description="60% loss of pVP2-VP4 and VP4-VP3 cleavages." evidence="4">
    <original>L</original>
    <variation>A</variation>
    <location>
        <position position="685"/>
    </location>
</feature>
<feature type="mutagenesis site" description="20% loss of pVP2-VP4 and VP4-VP3 cleavages." evidence="4">
    <original>I</original>
    <variation>A</variation>
    <location>
        <position position="686"/>
    </location>
</feature>
<feature type="mutagenesis site" description="20% loss of pVP2-VP4 and VP4-VP3 cleavages." evidence="4">
    <original>G</original>
    <variation>A</variation>
    <location>
        <position position="687"/>
    </location>
</feature>
<feature type="mutagenesis site" description="No effect on polyprotein processing." evidence="4">
    <original>Q</original>
    <variation>I</variation>
    <location>
        <position position="689"/>
    </location>
</feature>
<feature type="mutagenesis site" description="Strongly reduced VP4-VP3 cleavage. No effect on pVP2-VP4 cleavage." evidence="4">
    <original>D</original>
    <variation>L</variation>
    <location>
        <position position="693"/>
    </location>
</feature>
<feature type="mutagenesis site" description="No effect on polyprotein processing." evidence="4">
    <original>H</original>
    <variation>S</variation>
    <location>
        <position position="704"/>
    </location>
</feature>
<feature type="mutagenesis site" description="Complete loss of VP4-VP3 cleavage." evidence="4">
    <original>AS</original>
    <variation>LE</variation>
    <location>
        <begin position="734"/>
        <end position="735"/>
    </location>
</feature>
<feature type="sequence conflict" description="In Ref. 5; AAR10446." evidence="6" ref="5">
    <original>N</original>
    <variation>Y</variation>
    <location>
        <position position="883"/>
    </location>
</feature>
<feature type="helix" evidence="7">
    <location>
        <begin position="9"/>
        <end position="15"/>
    </location>
</feature>
<feature type="helix" evidence="7">
    <location>
        <begin position="17"/>
        <end position="19"/>
    </location>
</feature>
<feature type="strand" evidence="7">
    <location>
        <begin position="32"/>
        <end position="44"/>
    </location>
</feature>
<feature type="strand" evidence="7">
    <location>
        <begin position="51"/>
        <end position="55"/>
    </location>
</feature>
<feature type="strand" evidence="7">
    <location>
        <begin position="60"/>
        <end position="70"/>
    </location>
</feature>
<feature type="strand" evidence="7">
    <location>
        <begin position="74"/>
        <end position="84"/>
    </location>
</feature>
<feature type="helix" evidence="7">
    <location>
        <begin position="89"/>
        <end position="91"/>
    </location>
</feature>
<feature type="strand" evidence="7">
    <location>
        <begin position="93"/>
        <end position="107"/>
    </location>
</feature>
<feature type="strand" evidence="7">
    <location>
        <begin position="120"/>
        <end position="128"/>
    </location>
</feature>
<feature type="helix" evidence="7">
    <location>
        <begin position="130"/>
        <end position="132"/>
    </location>
</feature>
<feature type="helix" evidence="7">
    <location>
        <begin position="140"/>
        <end position="143"/>
    </location>
</feature>
<feature type="helix" evidence="7">
    <location>
        <begin position="148"/>
        <end position="150"/>
    </location>
</feature>
<feature type="strand" evidence="7">
    <location>
        <begin position="151"/>
        <end position="156"/>
    </location>
</feature>
<feature type="turn" evidence="7">
    <location>
        <begin position="157"/>
        <end position="159"/>
    </location>
</feature>
<feature type="strand" evidence="7">
    <location>
        <begin position="161"/>
        <end position="164"/>
    </location>
</feature>
<feature type="strand" evidence="7">
    <location>
        <begin position="202"/>
        <end position="208"/>
    </location>
</feature>
<feature type="strand" evidence="7">
    <location>
        <begin position="210"/>
        <end position="212"/>
    </location>
</feature>
<feature type="strand" evidence="7">
    <location>
        <begin position="223"/>
        <end position="232"/>
    </location>
</feature>
<feature type="strand" evidence="7">
    <location>
        <begin position="236"/>
        <end position="248"/>
    </location>
</feature>
<feature type="strand" evidence="7">
    <location>
        <begin position="254"/>
        <end position="263"/>
    </location>
</feature>
<feature type="strand" evidence="7">
    <location>
        <begin position="271"/>
        <end position="280"/>
    </location>
</feature>
<feature type="turn" evidence="7">
    <location>
        <begin position="282"/>
        <end position="286"/>
    </location>
</feature>
<feature type="strand" evidence="7">
    <location>
        <begin position="287"/>
        <end position="292"/>
    </location>
</feature>
<feature type="helix" evidence="7">
    <location>
        <begin position="298"/>
        <end position="300"/>
    </location>
</feature>
<feature type="strand" evidence="7">
    <location>
        <begin position="305"/>
        <end position="313"/>
    </location>
</feature>
<feature type="helix" evidence="7">
    <location>
        <begin position="317"/>
        <end position="319"/>
    </location>
</feature>
<feature type="strand" evidence="7">
    <location>
        <begin position="324"/>
        <end position="326"/>
    </location>
</feature>
<feature type="helix" evidence="7">
    <location>
        <begin position="327"/>
        <end position="329"/>
    </location>
</feature>
<feature type="strand" evidence="7">
    <location>
        <begin position="332"/>
        <end position="338"/>
    </location>
</feature>
<feature type="turn" evidence="7">
    <location>
        <begin position="339"/>
        <end position="342"/>
    </location>
</feature>
<feature type="turn" evidence="7">
    <location>
        <begin position="344"/>
        <end position="346"/>
    </location>
</feature>
<feature type="strand" evidence="7">
    <location>
        <begin position="350"/>
        <end position="357"/>
    </location>
</feature>
<feature type="strand" evidence="7">
    <location>
        <begin position="363"/>
        <end position="376"/>
    </location>
</feature>
<feature type="helix" evidence="7">
    <location>
        <begin position="378"/>
        <end position="381"/>
    </location>
</feature>
<feature type="helix" evidence="7">
    <location>
        <begin position="395"/>
        <end position="404"/>
    </location>
</feature>
<feature type="turn" evidence="7">
    <location>
        <begin position="405"/>
        <end position="410"/>
    </location>
</feature>
<feature type="strand" evidence="7">
    <location>
        <begin position="413"/>
        <end position="416"/>
    </location>
</feature>
<feature type="helix" evidence="7">
    <location>
        <begin position="417"/>
        <end position="422"/>
    </location>
</feature>
<feature type="helix" evidence="7">
    <location>
        <begin position="425"/>
        <end position="427"/>
    </location>
</feature>
<protein>
    <recommendedName>
        <fullName>Structural polyprotein</fullName>
        <shortName>PP</shortName>
    </recommendedName>
    <component>
        <recommendedName>
            <fullName>Precursor of VP2</fullName>
            <shortName>Pre-VP2</shortName>
        </recommendedName>
    </component>
    <component>
        <recommendedName>
            <fullName>Capsid protein VP2</fullName>
        </recommendedName>
    </component>
    <component>
        <recommendedName>
            <fullName>Structural peptide 1</fullName>
            <shortName>p1</shortName>
        </recommendedName>
    </component>
    <component>
        <recommendedName>
            <fullName>Structural peptide 2</fullName>
            <shortName>p2</shortName>
        </recommendedName>
    </component>
    <component>
        <recommendedName>
            <fullName>Structural peptide 3</fullName>
            <shortName>p3</shortName>
        </recommendedName>
    </component>
    <component>
        <recommendedName>
            <fullName>Protease VP4</fullName>
            <ecNumber>3.4.21.-</ecNumber>
        </recommendedName>
        <alternativeName>
            <fullName>Non-structural protein VP4</fullName>
            <shortName>NS</shortName>
        </alternativeName>
    </component>
    <component>
        <recommendedName>
            <fullName>Capsid protein VP3</fullName>
        </recommendedName>
    </component>
</protein>
<sequence>MNTNKATATYLKSIMLPETGPASIPDDITERHILKQETSSYNLEVSESGSGVLVCFPGAPGSRIGAHYRWNANQTGLEFDQWLETSQDLKKAFNYGRLISRKYDIQSSTLPAGLYALNGTLNAATFEGSLSEVESLTYNSLMSLTTNPQDKVNNQLVTKGVTVLNLPTGFDKPYVRLEDETPQGLQSMNGAKMRCTAAIAPRRYEIDLPSQRLPPVPATGTLTTLYEGNADIVNSTTVTGDINFSLAEQPADETKFDFQLDFMGLDNDVPVVTVVSSVLATNDNYRGVSAKMTQSIPTENITKPITRVKLSYKINQQTAIGNVATLGTMGPASVSFSSGNGNVPGVLRPITLVAYEKMTPLSILTVAGVSNYELIPNPELLKNMVTRYGKYDPEGLNYAKMILSHREELDIRTVWRTEEYKERTRVFNEITDFSSDLPTSKAWGWRDIVRGIRKVAAPVLSTLFPMAAPLIGMADQFIGDLTKTNAAGGRYHSMAAGGRYKDVLESWASGGPDGKFSRALKNRLESANYEEVELPPPSKGVIVPVVHTVKSAPGEAFGSLAIIIPGEYPELLDANQQVLSHFANDTGSVWGIGEDIPFEGDNMCYTALPLKEIKRNGNIVVEKIFAGPIMGPSAQLGLSLLVNDIEDGVPRMVFTGEIADDEETIIPICGVDIKAIAAHEQGLPLIGNQPGVDEEVRNTSLAAHLIQTGTLPVQRAKGSNKRIKYLGELMASNASGMDEELQRLLNATMARAKEVQDAEIYKLLKLMAWTRKNDLTDHMYEWSKEDPDALKFGKLISTPPKHPEKPKGPDQHHAQEARATRISLDAVRAGADFATPEWVALNNYRGPSPGQFKYYLITGREPEPGDEYEDYIKQPIVKPTDMNKIRRLANSVYGLPHQEPAPEEFYDAVAAVFAQNGGRGPDQDQMQDLRELARQMKRRPRNADAPRRTRAPAEPAPPGRSRFTPSGDNAEV</sequence>